<proteinExistence type="inferred from homology"/>
<evidence type="ECO:0000255" key="1">
    <source>
        <dbReference type="HAMAP-Rule" id="MF_00148"/>
    </source>
</evidence>
<comment type="function">
    <text evidence="1">Excises uracil residues from the DNA which can arise as a result of misincorporation of dUMP residues by DNA polymerase or due to deamination of cytosine.</text>
</comment>
<comment type="catalytic activity">
    <reaction evidence="1">
        <text>Hydrolyzes single-stranded DNA or mismatched double-stranded DNA and polynucleotides, releasing free uracil.</text>
        <dbReference type="EC" id="3.2.2.27"/>
    </reaction>
</comment>
<comment type="subcellular location">
    <subcellularLocation>
        <location evidence="1">Cytoplasm</location>
    </subcellularLocation>
</comment>
<comment type="similarity">
    <text evidence="1">Belongs to the uracil-DNA glycosylase (UDG) superfamily. UNG family.</text>
</comment>
<feature type="chain" id="PRO_1000096612" description="Uracil-DNA glycosylase">
    <location>
        <begin position="1"/>
        <end position="217"/>
    </location>
</feature>
<feature type="active site" description="Proton acceptor" evidence="1">
    <location>
        <position position="62"/>
    </location>
</feature>
<keyword id="KW-0963">Cytoplasm</keyword>
<keyword id="KW-0227">DNA damage</keyword>
<keyword id="KW-0234">DNA repair</keyword>
<keyword id="KW-0378">Hydrolase</keyword>
<protein>
    <recommendedName>
        <fullName evidence="1">Uracil-DNA glycosylase</fullName>
        <shortName evidence="1">UDG</shortName>
        <ecNumber evidence="1">3.2.2.27</ecNumber>
    </recommendedName>
</protein>
<name>UNG_STRPI</name>
<reference key="1">
    <citation type="journal article" date="2010" name="Genome Biol.">
        <title>Structure and dynamics of the pan-genome of Streptococcus pneumoniae and closely related species.</title>
        <authorList>
            <person name="Donati C."/>
            <person name="Hiller N.L."/>
            <person name="Tettelin H."/>
            <person name="Muzzi A."/>
            <person name="Croucher N.J."/>
            <person name="Angiuoli S.V."/>
            <person name="Oggioni M."/>
            <person name="Dunning Hotopp J.C."/>
            <person name="Hu F.Z."/>
            <person name="Riley D.R."/>
            <person name="Covacci A."/>
            <person name="Mitchell T.J."/>
            <person name="Bentley S.D."/>
            <person name="Kilian M."/>
            <person name="Ehrlich G.D."/>
            <person name="Rappuoli R."/>
            <person name="Moxon E.R."/>
            <person name="Masignani V."/>
        </authorList>
    </citation>
    <scope>NUCLEOTIDE SEQUENCE [LARGE SCALE GENOMIC DNA]</scope>
    <source>
        <strain>Hungary19A-6</strain>
    </source>
</reference>
<dbReference type="EC" id="3.2.2.27" evidence="1"/>
<dbReference type="EMBL" id="CP000936">
    <property type="protein sequence ID" value="ACA36187.1"/>
    <property type="molecule type" value="Genomic_DNA"/>
</dbReference>
<dbReference type="RefSeq" id="WP_000401331.1">
    <property type="nucleotide sequence ID" value="NC_010380.1"/>
</dbReference>
<dbReference type="SMR" id="B1IBW9"/>
<dbReference type="KEGG" id="spv:SPH_1283"/>
<dbReference type="HOGENOM" id="CLU_032162_3_1_9"/>
<dbReference type="Proteomes" id="UP000002163">
    <property type="component" value="Chromosome"/>
</dbReference>
<dbReference type="GO" id="GO:0005737">
    <property type="term" value="C:cytoplasm"/>
    <property type="evidence" value="ECO:0007669"/>
    <property type="project" value="UniProtKB-SubCell"/>
</dbReference>
<dbReference type="GO" id="GO:0004844">
    <property type="term" value="F:uracil DNA N-glycosylase activity"/>
    <property type="evidence" value="ECO:0007669"/>
    <property type="project" value="UniProtKB-UniRule"/>
</dbReference>
<dbReference type="GO" id="GO:0097510">
    <property type="term" value="P:base-excision repair, AP site formation via deaminated base removal"/>
    <property type="evidence" value="ECO:0007669"/>
    <property type="project" value="TreeGrafter"/>
</dbReference>
<dbReference type="CDD" id="cd10027">
    <property type="entry name" value="UDG-F1-like"/>
    <property type="match status" value="1"/>
</dbReference>
<dbReference type="FunFam" id="3.40.470.10:FF:000008">
    <property type="entry name" value="Uracil-DNA glycosylase"/>
    <property type="match status" value="1"/>
</dbReference>
<dbReference type="Gene3D" id="3.40.470.10">
    <property type="entry name" value="Uracil-DNA glycosylase-like domain"/>
    <property type="match status" value="1"/>
</dbReference>
<dbReference type="HAMAP" id="MF_00148">
    <property type="entry name" value="UDG"/>
    <property type="match status" value="1"/>
</dbReference>
<dbReference type="InterPro" id="IPR002043">
    <property type="entry name" value="UDG_fam1"/>
</dbReference>
<dbReference type="InterPro" id="IPR018085">
    <property type="entry name" value="Ura-DNA_Glyclase_AS"/>
</dbReference>
<dbReference type="InterPro" id="IPR005122">
    <property type="entry name" value="Uracil-DNA_glycosylase-like"/>
</dbReference>
<dbReference type="InterPro" id="IPR036895">
    <property type="entry name" value="Uracil-DNA_glycosylase-like_sf"/>
</dbReference>
<dbReference type="NCBIfam" id="NF003588">
    <property type="entry name" value="PRK05254.1-1"/>
    <property type="match status" value="1"/>
</dbReference>
<dbReference type="NCBIfam" id="NF003589">
    <property type="entry name" value="PRK05254.1-2"/>
    <property type="match status" value="1"/>
</dbReference>
<dbReference type="NCBIfam" id="NF003591">
    <property type="entry name" value="PRK05254.1-4"/>
    <property type="match status" value="1"/>
</dbReference>
<dbReference type="NCBIfam" id="NF003592">
    <property type="entry name" value="PRK05254.1-5"/>
    <property type="match status" value="1"/>
</dbReference>
<dbReference type="NCBIfam" id="TIGR00628">
    <property type="entry name" value="ung"/>
    <property type="match status" value="1"/>
</dbReference>
<dbReference type="PANTHER" id="PTHR11264">
    <property type="entry name" value="URACIL-DNA GLYCOSYLASE"/>
    <property type="match status" value="1"/>
</dbReference>
<dbReference type="PANTHER" id="PTHR11264:SF0">
    <property type="entry name" value="URACIL-DNA GLYCOSYLASE"/>
    <property type="match status" value="1"/>
</dbReference>
<dbReference type="Pfam" id="PF03167">
    <property type="entry name" value="UDG"/>
    <property type="match status" value="1"/>
</dbReference>
<dbReference type="SMART" id="SM00986">
    <property type="entry name" value="UDG"/>
    <property type="match status" value="1"/>
</dbReference>
<dbReference type="SMART" id="SM00987">
    <property type="entry name" value="UreE_C"/>
    <property type="match status" value="1"/>
</dbReference>
<dbReference type="SUPFAM" id="SSF52141">
    <property type="entry name" value="Uracil-DNA glycosylase-like"/>
    <property type="match status" value="1"/>
</dbReference>
<dbReference type="PROSITE" id="PS00130">
    <property type="entry name" value="U_DNA_GLYCOSYLASE"/>
    <property type="match status" value="1"/>
</dbReference>
<organism>
    <name type="scientific">Streptococcus pneumoniae (strain Hungary19A-6)</name>
    <dbReference type="NCBI Taxonomy" id="487214"/>
    <lineage>
        <taxon>Bacteria</taxon>
        <taxon>Bacillati</taxon>
        <taxon>Bacillota</taxon>
        <taxon>Bacilli</taxon>
        <taxon>Lactobacillales</taxon>
        <taxon>Streptococcaceae</taxon>
        <taxon>Streptococcus</taxon>
    </lineage>
</organism>
<gene>
    <name evidence="1" type="primary">ung</name>
    <name type="ordered locus">SPH_1283</name>
</gene>
<accession>B1IBW9</accession>
<sequence length="217" mass="24005">MEHSSWHALIKAQLPEGYFGKINQFMNQVYVQGTVYPPKEKVFQALLTTPLEEVKVVILGQDPYHGPGQAQGLSFSVPDSIPAPPSLQNILKELSDDLGVKKSHDLTAWAEQGVLLLNACLTVPAGQANGHAGQIWEPFTDAVIQVVNHLDRPVVFVLWGAYARKKKALVTNPHHLIIESAHPSPLSVYRGFWGSKPFSKANAFLKETGQEPIDWLR</sequence>